<reference key="1">
    <citation type="submission" date="2008-02" db="EMBL/GenBank/DDBJ databases">
        <title>Complete sequence of Haemophilus somnus 2336.</title>
        <authorList>
            <consortium name="US DOE Joint Genome Institute"/>
            <person name="Siddaramappa S."/>
            <person name="Duncan A.J."/>
            <person name="Challacombe J.F."/>
            <person name="Rainey D."/>
            <person name="Gillaspy A.F."/>
            <person name="Carson M."/>
            <person name="Gipson J."/>
            <person name="Gipson M."/>
            <person name="Bruce D."/>
            <person name="Detter J.C."/>
            <person name="Han C.S."/>
            <person name="Land M."/>
            <person name="Tapia R."/>
            <person name="Thompson L.S."/>
            <person name="Orvis J."/>
            <person name="Zaitshik J."/>
            <person name="Barnes G."/>
            <person name="Brettin T.S."/>
            <person name="Dyer D.W."/>
            <person name="Inzana T.J."/>
        </authorList>
    </citation>
    <scope>NUCLEOTIDE SEQUENCE [LARGE SCALE GENOMIC DNA]</scope>
    <source>
        <strain>2336</strain>
    </source>
</reference>
<gene>
    <name evidence="1" type="primary">deoC</name>
    <name type="ordered locus">HSM_1215</name>
</gene>
<sequence>MQSYDIAQFIDHTALTAEKTEQDILDLCNEAIEHNFFSVCINSGYIPLARQKLQNTNVKICTVVGFPLGANLSTVKAFEAKEAIKAGATEIDMVINIGWIKSNQWESVKADIQAVLAACEGALLKVILETCLLTKEEIITACKICRELGVGFVKTSTGFNKGGATVENIALMRQVVGENIGVKASGGVRDTKTAIEMIKNGATRIGSSSGIAIINGLTDNNAIY</sequence>
<protein>
    <recommendedName>
        <fullName evidence="1">Deoxyribose-phosphate aldolase</fullName>
        <shortName evidence="1">DERA</shortName>
        <ecNumber evidence="1">4.1.2.4</ecNumber>
    </recommendedName>
    <alternativeName>
        <fullName evidence="1">2-deoxy-D-ribose 5-phosphate aldolase</fullName>
    </alternativeName>
    <alternativeName>
        <fullName evidence="1">Phosphodeoxyriboaldolase</fullName>
        <shortName evidence="1">Deoxyriboaldolase</shortName>
    </alternativeName>
</protein>
<name>DEOC_HISS2</name>
<accession>B0UTU0</accession>
<dbReference type="EC" id="4.1.2.4" evidence="1"/>
<dbReference type="EMBL" id="CP000947">
    <property type="protein sequence ID" value="ACA30940.1"/>
    <property type="molecule type" value="Genomic_DNA"/>
</dbReference>
<dbReference type="RefSeq" id="WP_011608901.1">
    <property type="nucleotide sequence ID" value="NC_010519.1"/>
</dbReference>
<dbReference type="SMR" id="B0UTU0"/>
<dbReference type="STRING" id="228400.HSM_1215"/>
<dbReference type="GeneID" id="31487518"/>
<dbReference type="KEGG" id="hsm:HSM_1215"/>
<dbReference type="HOGENOM" id="CLU_053595_0_1_6"/>
<dbReference type="UniPathway" id="UPA00002">
    <property type="reaction ID" value="UER00468"/>
</dbReference>
<dbReference type="GO" id="GO:0005737">
    <property type="term" value="C:cytoplasm"/>
    <property type="evidence" value="ECO:0007669"/>
    <property type="project" value="UniProtKB-SubCell"/>
</dbReference>
<dbReference type="GO" id="GO:0004139">
    <property type="term" value="F:deoxyribose-phosphate aldolase activity"/>
    <property type="evidence" value="ECO:0007669"/>
    <property type="project" value="UniProtKB-UniRule"/>
</dbReference>
<dbReference type="GO" id="GO:0006018">
    <property type="term" value="P:2-deoxyribose 1-phosphate catabolic process"/>
    <property type="evidence" value="ECO:0007669"/>
    <property type="project" value="UniProtKB-UniRule"/>
</dbReference>
<dbReference type="GO" id="GO:0016052">
    <property type="term" value="P:carbohydrate catabolic process"/>
    <property type="evidence" value="ECO:0007669"/>
    <property type="project" value="TreeGrafter"/>
</dbReference>
<dbReference type="GO" id="GO:0009264">
    <property type="term" value="P:deoxyribonucleotide catabolic process"/>
    <property type="evidence" value="ECO:0007669"/>
    <property type="project" value="InterPro"/>
</dbReference>
<dbReference type="CDD" id="cd00959">
    <property type="entry name" value="DeoC"/>
    <property type="match status" value="1"/>
</dbReference>
<dbReference type="FunFam" id="3.20.20.70:FF:000044">
    <property type="entry name" value="Deoxyribose-phosphate aldolase"/>
    <property type="match status" value="1"/>
</dbReference>
<dbReference type="Gene3D" id="3.20.20.70">
    <property type="entry name" value="Aldolase class I"/>
    <property type="match status" value="1"/>
</dbReference>
<dbReference type="HAMAP" id="MF_00114">
    <property type="entry name" value="DeoC_type1"/>
    <property type="match status" value="1"/>
</dbReference>
<dbReference type="InterPro" id="IPR013785">
    <property type="entry name" value="Aldolase_TIM"/>
</dbReference>
<dbReference type="InterPro" id="IPR011343">
    <property type="entry name" value="DeoC"/>
</dbReference>
<dbReference type="InterPro" id="IPR002915">
    <property type="entry name" value="DeoC/FbaB/LacD_aldolase"/>
</dbReference>
<dbReference type="InterPro" id="IPR028581">
    <property type="entry name" value="DeoC_typeI"/>
</dbReference>
<dbReference type="NCBIfam" id="TIGR00126">
    <property type="entry name" value="deoC"/>
    <property type="match status" value="1"/>
</dbReference>
<dbReference type="PANTHER" id="PTHR10889">
    <property type="entry name" value="DEOXYRIBOSE-PHOSPHATE ALDOLASE"/>
    <property type="match status" value="1"/>
</dbReference>
<dbReference type="PANTHER" id="PTHR10889:SF1">
    <property type="entry name" value="DEOXYRIBOSE-PHOSPHATE ALDOLASE"/>
    <property type="match status" value="1"/>
</dbReference>
<dbReference type="Pfam" id="PF01791">
    <property type="entry name" value="DeoC"/>
    <property type="match status" value="1"/>
</dbReference>
<dbReference type="PIRSF" id="PIRSF001357">
    <property type="entry name" value="DeoC"/>
    <property type="match status" value="1"/>
</dbReference>
<dbReference type="SMART" id="SM01133">
    <property type="entry name" value="DeoC"/>
    <property type="match status" value="1"/>
</dbReference>
<dbReference type="SUPFAM" id="SSF51569">
    <property type="entry name" value="Aldolase"/>
    <property type="match status" value="1"/>
</dbReference>
<feature type="chain" id="PRO_1000076029" description="Deoxyribose-phosphate aldolase">
    <location>
        <begin position="1"/>
        <end position="224"/>
    </location>
</feature>
<feature type="active site" description="Proton donor/acceptor" evidence="1">
    <location>
        <position position="92"/>
    </location>
</feature>
<feature type="active site" description="Schiff-base intermediate with acetaldehyde" evidence="1">
    <location>
        <position position="154"/>
    </location>
</feature>
<feature type="active site" description="Proton donor/acceptor" evidence="1">
    <location>
        <position position="183"/>
    </location>
</feature>
<organism>
    <name type="scientific">Histophilus somni (strain 2336)</name>
    <name type="common">Haemophilus somnus</name>
    <dbReference type="NCBI Taxonomy" id="228400"/>
    <lineage>
        <taxon>Bacteria</taxon>
        <taxon>Pseudomonadati</taxon>
        <taxon>Pseudomonadota</taxon>
        <taxon>Gammaproteobacteria</taxon>
        <taxon>Pasteurellales</taxon>
        <taxon>Pasteurellaceae</taxon>
        <taxon>Histophilus</taxon>
    </lineage>
</organism>
<proteinExistence type="inferred from homology"/>
<keyword id="KW-0963">Cytoplasm</keyword>
<keyword id="KW-0456">Lyase</keyword>
<keyword id="KW-0704">Schiff base</keyword>
<evidence type="ECO:0000255" key="1">
    <source>
        <dbReference type="HAMAP-Rule" id="MF_00114"/>
    </source>
</evidence>
<comment type="function">
    <text evidence="1">Catalyzes a reversible aldol reaction between acetaldehyde and D-glyceraldehyde 3-phosphate to generate 2-deoxy-D-ribose 5-phosphate.</text>
</comment>
<comment type="catalytic activity">
    <reaction evidence="1">
        <text>2-deoxy-D-ribose 5-phosphate = D-glyceraldehyde 3-phosphate + acetaldehyde</text>
        <dbReference type="Rhea" id="RHEA:12821"/>
        <dbReference type="ChEBI" id="CHEBI:15343"/>
        <dbReference type="ChEBI" id="CHEBI:59776"/>
        <dbReference type="ChEBI" id="CHEBI:62877"/>
        <dbReference type="EC" id="4.1.2.4"/>
    </reaction>
</comment>
<comment type="pathway">
    <text evidence="1">Carbohydrate degradation; 2-deoxy-D-ribose 1-phosphate degradation; D-glyceraldehyde 3-phosphate and acetaldehyde from 2-deoxy-alpha-D-ribose 1-phosphate: step 2/2.</text>
</comment>
<comment type="subcellular location">
    <subcellularLocation>
        <location evidence="1">Cytoplasm</location>
    </subcellularLocation>
</comment>
<comment type="similarity">
    <text evidence="1">Belongs to the DeoC/FbaB aldolase family. DeoC type 1 subfamily.</text>
</comment>